<dbReference type="EC" id="6.1.1.16" evidence="1"/>
<dbReference type="EMBL" id="CP000551">
    <property type="protein sequence ID" value="ABM70600.1"/>
    <property type="molecule type" value="Genomic_DNA"/>
</dbReference>
<dbReference type="RefSeq" id="WP_011818741.1">
    <property type="nucleotide sequence ID" value="NC_008816.1"/>
</dbReference>
<dbReference type="SMR" id="A2BS39"/>
<dbReference type="STRING" id="146891.A9601_13161"/>
<dbReference type="KEGG" id="pmb:A9601_13161"/>
<dbReference type="eggNOG" id="COG0215">
    <property type="taxonomic scope" value="Bacteria"/>
</dbReference>
<dbReference type="HOGENOM" id="CLU_013528_0_1_3"/>
<dbReference type="OrthoDB" id="9815130at2"/>
<dbReference type="Proteomes" id="UP000002590">
    <property type="component" value="Chromosome"/>
</dbReference>
<dbReference type="GO" id="GO:0005829">
    <property type="term" value="C:cytosol"/>
    <property type="evidence" value="ECO:0007669"/>
    <property type="project" value="TreeGrafter"/>
</dbReference>
<dbReference type="GO" id="GO:0005524">
    <property type="term" value="F:ATP binding"/>
    <property type="evidence" value="ECO:0007669"/>
    <property type="project" value="UniProtKB-UniRule"/>
</dbReference>
<dbReference type="GO" id="GO:0004817">
    <property type="term" value="F:cysteine-tRNA ligase activity"/>
    <property type="evidence" value="ECO:0007669"/>
    <property type="project" value="UniProtKB-UniRule"/>
</dbReference>
<dbReference type="GO" id="GO:0008270">
    <property type="term" value="F:zinc ion binding"/>
    <property type="evidence" value="ECO:0007669"/>
    <property type="project" value="UniProtKB-UniRule"/>
</dbReference>
<dbReference type="GO" id="GO:0006423">
    <property type="term" value="P:cysteinyl-tRNA aminoacylation"/>
    <property type="evidence" value="ECO:0007669"/>
    <property type="project" value="UniProtKB-UniRule"/>
</dbReference>
<dbReference type="CDD" id="cd00672">
    <property type="entry name" value="CysRS_core"/>
    <property type="match status" value="1"/>
</dbReference>
<dbReference type="FunFam" id="3.40.50.620:FF:000009">
    <property type="entry name" value="Cysteine--tRNA ligase"/>
    <property type="match status" value="1"/>
</dbReference>
<dbReference type="Gene3D" id="1.20.120.1910">
    <property type="entry name" value="Cysteine-tRNA ligase, C-terminal anti-codon recognition domain"/>
    <property type="match status" value="1"/>
</dbReference>
<dbReference type="Gene3D" id="3.40.50.620">
    <property type="entry name" value="HUPs"/>
    <property type="match status" value="1"/>
</dbReference>
<dbReference type="HAMAP" id="MF_00041">
    <property type="entry name" value="Cys_tRNA_synth"/>
    <property type="match status" value="1"/>
</dbReference>
<dbReference type="InterPro" id="IPR015803">
    <property type="entry name" value="Cys-tRNA-ligase"/>
</dbReference>
<dbReference type="InterPro" id="IPR015273">
    <property type="entry name" value="Cys-tRNA-synt_Ia_DALR"/>
</dbReference>
<dbReference type="InterPro" id="IPR024909">
    <property type="entry name" value="Cys-tRNA/MSH_ligase"/>
</dbReference>
<dbReference type="InterPro" id="IPR014729">
    <property type="entry name" value="Rossmann-like_a/b/a_fold"/>
</dbReference>
<dbReference type="InterPro" id="IPR032678">
    <property type="entry name" value="tRNA-synt_1_cat_dom"/>
</dbReference>
<dbReference type="InterPro" id="IPR009080">
    <property type="entry name" value="tRNAsynth_Ia_anticodon-bd"/>
</dbReference>
<dbReference type="NCBIfam" id="TIGR00435">
    <property type="entry name" value="cysS"/>
    <property type="match status" value="1"/>
</dbReference>
<dbReference type="PANTHER" id="PTHR10890:SF3">
    <property type="entry name" value="CYSTEINE--TRNA LIGASE, CYTOPLASMIC"/>
    <property type="match status" value="1"/>
</dbReference>
<dbReference type="PANTHER" id="PTHR10890">
    <property type="entry name" value="CYSTEINYL-TRNA SYNTHETASE"/>
    <property type="match status" value="1"/>
</dbReference>
<dbReference type="Pfam" id="PF09190">
    <property type="entry name" value="DALR_2"/>
    <property type="match status" value="1"/>
</dbReference>
<dbReference type="Pfam" id="PF01406">
    <property type="entry name" value="tRNA-synt_1e"/>
    <property type="match status" value="1"/>
</dbReference>
<dbReference type="PRINTS" id="PR00983">
    <property type="entry name" value="TRNASYNTHCYS"/>
</dbReference>
<dbReference type="SMART" id="SM00840">
    <property type="entry name" value="DALR_2"/>
    <property type="match status" value="1"/>
</dbReference>
<dbReference type="SUPFAM" id="SSF47323">
    <property type="entry name" value="Anticodon-binding domain of a subclass of class I aminoacyl-tRNA synthetases"/>
    <property type="match status" value="1"/>
</dbReference>
<dbReference type="SUPFAM" id="SSF52374">
    <property type="entry name" value="Nucleotidylyl transferase"/>
    <property type="match status" value="1"/>
</dbReference>
<feature type="chain" id="PRO_0000332871" description="Cysteine--tRNA ligase">
    <location>
        <begin position="1"/>
        <end position="489"/>
    </location>
</feature>
<feature type="short sequence motif" description="'HIGH' region">
    <location>
        <begin position="29"/>
        <end position="39"/>
    </location>
</feature>
<feature type="short sequence motif" description="'KMSKS' region">
    <location>
        <begin position="268"/>
        <end position="272"/>
    </location>
</feature>
<feature type="binding site" evidence="1">
    <location>
        <position position="27"/>
    </location>
    <ligand>
        <name>Zn(2+)</name>
        <dbReference type="ChEBI" id="CHEBI:29105"/>
    </ligand>
</feature>
<feature type="binding site" evidence="1">
    <location>
        <position position="211"/>
    </location>
    <ligand>
        <name>Zn(2+)</name>
        <dbReference type="ChEBI" id="CHEBI:29105"/>
    </ligand>
</feature>
<feature type="binding site" evidence="1">
    <location>
        <position position="236"/>
    </location>
    <ligand>
        <name>Zn(2+)</name>
        <dbReference type="ChEBI" id="CHEBI:29105"/>
    </ligand>
</feature>
<feature type="binding site" evidence="1">
    <location>
        <position position="240"/>
    </location>
    <ligand>
        <name>Zn(2+)</name>
        <dbReference type="ChEBI" id="CHEBI:29105"/>
    </ligand>
</feature>
<feature type="binding site" evidence="1">
    <location>
        <position position="271"/>
    </location>
    <ligand>
        <name>ATP</name>
        <dbReference type="ChEBI" id="CHEBI:30616"/>
    </ligand>
</feature>
<proteinExistence type="inferred from homology"/>
<protein>
    <recommendedName>
        <fullName evidence="1">Cysteine--tRNA ligase</fullName>
        <ecNumber evidence="1">6.1.1.16</ecNumber>
    </recommendedName>
    <alternativeName>
        <fullName evidence="1">Cysteinyl-tRNA synthetase</fullName>
        <shortName evidence="1">CysRS</shortName>
    </alternativeName>
</protein>
<keyword id="KW-0030">Aminoacyl-tRNA synthetase</keyword>
<keyword id="KW-0067">ATP-binding</keyword>
<keyword id="KW-0963">Cytoplasm</keyword>
<keyword id="KW-0436">Ligase</keyword>
<keyword id="KW-0479">Metal-binding</keyword>
<keyword id="KW-0547">Nucleotide-binding</keyword>
<keyword id="KW-0648">Protein biosynthesis</keyword>
<keyword id="KW-0862">Zinc</keyword>
<reference key="1">
    <citation type="journal article" date="2007" name="PLoS Genet.">
        <title>Patterns and implications of gene gain and loss in the evolution of Prochlorococcus.</title>
        <authorList>
            <person name="Kettler G.C."/>
            <person name="Martiny A.C."/>
            <person name="Huang K."/>
            <person name="Zucker J."/>
            <person name="Coleman M.L."/>
            <person name="Rodrigue S."/>
            <person name="Chen F."/>
            <person name="Lapidus A."/>
            <person name="Ferriera S."/>
            <person name="Johnson J."/>
            <person name="Steglich C."/>
            <person name="Church G.M."/>
            <person name="Richardson P."/>
            <person name="Chisholm S.W."/>
        </authorList>
    </citation>
    <scope>NUCLEOTIDE SEQUENCE [LARGE SCALE GENOMIC DNA]</scope>
    <source>
        <strain>AS9601</strain>
    </source>
</reference>
<gene>
    <name evidence="1" type="primary">cysS</name>
    <name type="ordered locus">A9601_13161</name>
</gene>
<accession>A2BS39</accession>
<organism>
    <name type="scientific">Prochlorococcus marinus (strain AS9601)</name>
    <dbReference type="NCBI Taxonomy" id="146891"/>
    <lineage>
        <taxon>Bacteria</taxon>
        <taxon>Bacillati</taxon>
        <taxon>Cyanobacteriota</taxon>
        <taxon>Cyanophyceae</taxon>
        <taxon>Synechococcales</taxon>
        <taxon>Prochlorococcaceae</taxon>
        <taxon>Prochlorococcus</taxon>
    </lineage>
</organism>
<comment type="catalytic activity">
    <reaction evidence="1">
        <text>tRNA(Cys) + L-cysteine + ATP = L-cysteinyl-tRNA(Cys) + AMP + diphosphate</text>
        <dbReference type="Rhea" id="RHEA:17773"/>
        <dbReference type="Rhea" id="RHEA-COMP:9661"/>
        <dbReference type="Rhea" id="RHEA-COMP:9679"/>
        <dbReference type="ChEBI" id="CHEBI:30616"/>
        <dbReference type="ChEBI" id="CHEBI:33019"/>
        <dbReference type="ChEBI" id="CHEBI:35235"/>
        <dbReference type="ChEBI" id="CHEBI:78442"/>
        <dbReference type="ChEBI" id="CHEBI:78517"/>
        <dbReference type="ChEBI" id="CHEBI:456215"/>
        <dbReference type="EC" id="6.1.1.16"/>
    </reaction>
</comment>
<comment type="cofactor">
    <cofactor evidence="1">
        <name>Zn(2+)</name>
        <dbReference type="ChEBI" id="CHEBI:29105"/>
    </cofactor>
    <text evidence="1">Binds 1 zinc ion per subunit.</text>
</comment>
<comment type="subunit">
    <text evidence="1">Monomer.</text>
</comment>
<comment type="subcellular location">
    <subcellularLocation>
        <location evidence="1">Cytoplasm</location>
    </subcellularLocation>
</comment>
<comment type="similarity">
    <text evidence="1">Belongs to the class-I aminoacyl-tRNA synthetase family.</text>
</comment>
<name>SYC_PROMS</name>
<sequence>MIKLFNTLSKKVEVFKPIDDVVKIYCCGVTVYDLCHLGHARSYIAWDVLRRFLIYSDFKVKYVQNFTDIDDKILKRAKEESSSMKEVSEKNIIEFHKDMDSLGIMRPDSMPRATNHICNICSFITILEDKGYAYSRDGDVYYSVFKNKNYGKLSNQNLQEQNINQQGRMVNEENSKKLNPQDFALWKKAKDDEPFFDSPWGKGRPGWHIECSAMVKDELGDTIDIHLGGSDLIFPHHENEIAQSEAANGKKLANYWLHNGMVNVNGQKMSKSLKNFKTIRELIKSGISPMTLRYFVMTVNYRKPLDFTEEALRSASEAWKNINVALSFMDLTKGAFISIDKNESIEEKYKEKISFELSQKKLKFSEALGNDLNTAGAIAIIYDLAKPLKNFLNQFQRVEGFTVELNEKFFLLENFKTLEKLTEVLGLKKEVLVKESKIKEEEISSLINERLKAKMEKNYAKADEIRNLLKEKGIELIDQSKEITTWIRV</sequence>
<evidence type="ECO:0000255" key="1">
    <source>
        <dbReference type="HAMAP-Rule" id="MF_00041"/>
    </source>
</evidence>